<sequence length="273" mass="28678">MSYLLDPSRKTITIPKLQAMRDAGEKIAMLTAYDSSFAALLDYCGVEMILVGDSLGNVMQGQQTTLPVTLEQMAYHTECAARGNQTSLLLTDLPFGTYPTPEAAFASAVTLMKAGAQMVKLEGGDWLAPIVKFLVERSIPVCAHIGLTPQSVHALGGFKVQGKTNAGAAQLKRDALALQAAGAQVVLMEAVPAALAGEITQSLTVPTIGIGAGADCSGQVLVLQDMLNVYPGRKAKFVRNFMDGQTSIEAAVRAYVAAVKDGSFPAAEHTFSA</sequence>
<accession>Q0K762</accession>
<reference key="1">
    <citation type="journal article" date="2006" name="Nat. Biotechnol.">
        <title>Genome sequence of the bioplastic-producing 'Knallgas' bacterium Ralstonia eutropha H16.</title>
        <authorList>
            <person name="Pohlmann A."/>
            <person name="Fricke W.F."/>
            <person name="Reinecke F."/>
            <person name="Kusian B."/>
            <person name="Liesegang H."/>
            <person name="Cramm R."/>
            <person name="Eitinger T."/>
            <person name="Ewering C."/>
            <person name="Poetter M."/>
            <person name="Schwartz E."/>
            <person name="Strittmatter A."/>
            <person name="Voss I."/>
            <person name="Gottschalk G."/>
            <person name="Steinbuechel A."/>
            <person name="Friedrich B."/>
            <person name="Bowien B."/>
        </authorList>
    </citation>
    <scope>NUCLEOTIDE SEQUENCE [LARGE SCALE GENOMIC DNA]</scope>
    <source>
        <strain>ATCC 17699 / DSM 428 / KCTC 22496 / NCIMB 10442 / H16 / Stanier 337</strain>
    </source>
</reference>
<proteinExistence type="inferred from homology"/>
<gene>
    <name evidence="1" type="primary">panB</name>
    <name type="ordered locus">H16_A3084</name>
</gene>
<feature type="chain" id="PRO_0000297346" description="3-methyl-2-oxobutanoate hydroxymethyltransferase">
    <location>
        <begin position="1"/>
        <end position="273"/>
    </location>
</feature>
<feature type="active site" description="Proton acceptor" evidence="1">
    <location>
        <position position="189"/>
    </location>
</feature>
<feature type="binding site" evidence="1">
    <location>
        <begin position="53"/>
        <end position="54"/>
    </location>
    <ligand>
        <name>3-methyl-2-oxobutanoate</name>
        <dbReference type="ChEBI" id="CHEBI:11851"/>
    </ligand>
</feature>
<feature type="binding site" evidence="1">
    <location>
        <position position="53"/>
    </location>
    <ligand>
        <name>Mg(2+)</name>
        <dbReference type="ChEBI" id="CHEBI:18420"/>
    </ligand>
</feature>
<feature type="binding site" evidence="1">
    <location>
        <position position="92"/>
    </location>
    <ligand>
        <name>3-methyl-2-oxobutanoate</name>
        <dbReference type="ChEBI" id="CHEBI:11851"/>
    </ligand>
</feature>
<feature type="binding site" evidence="1">
    <location>
        <position position="92"/>
    </location>
    <ligand>
        <name>Mg(2+)</name>
        <dbReference type="ChEBI" id="CHEBI:18420"/>
    </ligand>
</feature>
<feature type="binding site" evidence="1">
    <location>
        <position position="120"/>
    </location>
    <ligand>
        <name>3-methyl-2-oxobutanoate</name>
        <dbReference type="ChEBI" id="CHEBI:11851"/>
    </ligand>
</feature>
<feature type="binding site" evidence="1">
    <location>
        <position position="122"/>
    </location>
    <ligand>
        <name>Mg(2+)</name>
        <dbReference type="ChEBI" id="CHEBI:18420"/>
    </ligand>
</feature>
<protein>
    <recommendedName>
        <fullName evidence="1">3-methyl-2-oxobutanoate hydroxymethyltransferase</fullName>
        <ecNumber evidence="1">2.1.2.11</ecNumber>
    </recommendedName>
    <alternativeName>
        <fullName evidence="1">Ketopantoate hydroxymethyltransferase</fullName>
        <shortName evidence="1">KPHMT</shortName>
    </alternativeName>
</protein>
<keyword id="KW-0963">Cytoplasm</keyword>
<keyword id="KW-0460">Magnesium</keyword>
<keyword id="KW-0479">Metal-binding</keyword>
<keyword id="KW-0566">Pantothenate biosynthesis</keyword>
<keyword id="KW-1185">Reference proteome</keyword>
<keyword id="KW-0808">Transferase</keyword>
<comment type="function">
    <text evidence="1">Catalyzes the reversible reaction in which hydroxymethyl group from 5,10-methylenetetrahydrofolate is transferred onto alpha-ketoisovalerate to form ketopantoate.</text>
</comment>
<comment type="catalytic activity">
    <reaction evidence="1">
        <text>3-methyl-2-oxobutanoate + (6R)-5,10-methylene-5,6,7,8-tetrahydrofolate + H2O = 2-dehydropantoate + (6S)-5,6,7,8-tetrahydrofolate</text>
        <dbReference type="Rhea" id="RHEA:11824"/>
        <dbReference type="ChEBI" id="CHEBI:11561"/>
        <dbReference type="ChEBI" id="CHEBI:11851"/>
        <dbReference type="ChEBI" id="CHEBI:15377"/>
        <dbReference type="ChEBI" id="CHEBI:15636"/>
        <dbReference type="ChEBI" id="CHEBI:57453"/>
        <dbReference type="EC" id="2.1.2.11"/>
    </reaction>
</comment>
<comment type="cofactor">
    <cofactor evidence="1">
        <name>Mg(2+)</name>
        <dbReference type="ChEBI" id="CHEBI:18420"/>
    </cofactor>
    <text evidence="1">Binds 1 Mg(2+) ion per subunit.</text>
</comment>
<comment type="pathway">
    <text evidence="1">Cofactor biosynthesis; (R)-pantothenate biosynthesis; (R)-pantoate from 3-methyl-2-oxobutanoate: step 1/2.</text>
</comment>
<comment type="subunit">
    <text evidence="1">Homodecamer; pentamer of dimers.</text>
</comment>
<comment type="subcellular location">
    <subcellularLocation>
        <location evidence="1">Cytoplasm</location>
    </subcellularLocation>
</comment>
<comment type="similarity">
    <text evidence="1">Belongs to the PanB family.</text>
</comment>
<comment type="sequence caution" evidence="2">
    <conflict type="erroneous initiation">
        <sequence resource="EMBL-CDS" id="CAJ94159"/>
    </conflict>
</comment>
<organism>
    <name type="scientific">Cupriavidus necator (strain ATCC 17699 / DSM 428 / KCTC 22496 / NCIMB 10442 / H16 / Stanier 337)</name>
    <name type="common">Ralstonia eutropha</name>
    <dbReference type="NCBI Taxonomy" id="381666"/>
    <lineage>
        <taxon>Bacteria</taxon>
        <taxon>Pseudomonadati</taxon>
        <taxon>Pseudomonadota</taxon>
        <taxon>Betaproteobacteria</taxon>
        <taxon>Burkholderiales</taxon>
        <taxon>Burkholderiaceae</taxon>
        <taxon>Cupriavidus</taxon>
    </lineage>
</organism>
<name>PANB_CUPNH</name>
<evidence type="ECO:0000255" key="1">
    <source>
        <dbReference type="HAMAP-Rule" id="MF_00156"/>
    </source>
</evidence>
<evidence type="ECO:0000305" key="2"/>
<dbReference type="EC" id="2.1.2.11" evidence="1"/>
<dbReference type="EMBL" id="AM260479">
    <property type="protein sequence ID" value="CAJ94159.1"/>
    <property type="status" value="ALT_INIT"/>
    <property type="molecule type" value="Genomic_DNA"/>
</dbReference>
<dbReference type="RefSeq" id="WP_010815029.1">
    <property type="nucleotide sequence ID" value="NZ_CP039287.1"/>
</dbReference>
<dbReference type="SMR" id="Q0K762"/>
<dbReference type="STRING" id="381666.H16_A3084"/>
<dbReference type="KEGG" id="reh:H16_A3084"/>
<dbReference type="eggNOG" id="COG0413">
    <property type="taxonomic scope" value="Bacteria"/>
</dbReference>
<dbReference type="HOGENOM" id="CLU_036645_1_0_4"/>
<dbReference type="OrthoDB" id="9781789at2"/>
<dbReference type="UniPathway" id="UPA00028">
    <property type="reaction ID" value="UER00003"/>
</dbReference>
<dbReference type="Proteomes" id="UP000008210">
    <property type="component" value="Chromosome 1"/>
</dbReference>
<dbReference type="GO" id="GO:0005737">
    <property type="term" value="C:cytoplasm"/>
    <property type="evidence" value="ECO:0007669"/>
    <property type="project" value="UniProtKB-SubCell"/>
</dbReference>
<dbReference type="GO" id="GO:0003864">
    <property type="term" value="F:3-methyl-2-oxobutanoate hydroxymethyltransferase activity"/>
    <property type="evidence" value="ECO:0007669"/>
    <property type="project" value="UniProtKB-UniRule"/>
</dbReference>
<dbReference type="GO" id="GO:0000287">
    <property type="term" value="F:magnesium ion binding"/>
    <property type="evidence" value="ECO:0007669"/>
    <property type="project" value="TreeGrafter"/>
</dbReference>
<dbReference type="GO" id="GO:0015940">
    <property type="term" value="P:pantothenate biosynthetic process"/>
    <property type="evidence" value="ECO:0007669"/>
    <property type="project" value="UniProtKB-UniRule"/>
</dbReference>
<dbReference type="CDD" id="cd06557">
    <property type="entry name" value="KPHMT-like"/>
    <property type="match status" value="1"/>
</dbReference>
<dbReference type="FunFam" id="3.20.20.60:FF:000003">
    <property type="entry name" value="3-methyl-2-oxobutanoate hydroxymethyltransferase"/>
    <property type="match status" value="1"/>
</dbReference>
<dbReference type="Gene3D" id="3.20.20.60">
    <property type="entry name" value="Phosphoenolpyruvate-binding domains"/>
    <property type="match status" value="1"/>
</dbReference>
<dbReference type="HAMAP" id="MF_00156">
    <property type="entry name" value="PanB"/>
    <property type="match status" value="1"/>
</dbReference>
<dbReference type="InterPro" id="IPR003700">
    <property type="entry name" value="Pantoate_hydroxy_MeTrfase"/>
</dbReference>
<dbReference type="InterPro" id="IPR015813">
    <property type="entry name" value="Pyrv/PenolPyrv_kinase-like_dom"/>
</dbReference>
<dbReference type="InterPro" id="IPR040442">
    <property type="entry name" value="Pyrv_kinase-like_dom_sf"/>
</dbReference>
<dbReference type="NCBIfam" id="TIGR00222">
    <property type="entry name" value="panB"/>
    <property type="match status" value="1"/>
</dbReference>
<dbReference type="NCBIfam" id="NF001452">
    <property type="entry name" value="PRK00311.1"/>
    <property type="match status" value="1"/>
</dbReference>
<dbReference type="PANTHER" id="PTHR20881">
    <property type="entry name" value="3-METHYL-2-OXOBUTANOATE HYDROXYMETHYLTRANSFERASE"/>
    <property type="match status" value="1"/>
</dbReference>
<dbReference type="PANTHER" id="PTHR20881:SF0">
    <property type="entry name" value="3-METHYL-2-OXOBUTANOATE HYDROXYMETHYLTRANSFERASE"/>
    <property type="match status" value="1"/>
</dbReference>
<dbReference type="Pfam" id="PF02548">
    <property type="entry name" value="Pantoate_transf"/>
    <property type="match status" value="1"/>
</dbReference>
<dbReference type="PIRSF" id="PIRSF000388">
    <property type="entry name" value="Pantoate_hydroxy_MeTrfase"/>
    <property type="match status" value="1"/>
</dbReference>
<dbReference type="SUPFAM" id="SSF51621">
    <property type="entry name" value="Phosphoenolpyruvate/pyruvate domain"/>
    <property type="match status" value="1"/>
</dbReference>